<comment type="function">
    <text evidence="1">Required for the expression of anaerobic nitric oxide (NO) reductase, acts as a transcriptional activator for at least the norVW operon. Activation also requires sigma-54.</text>
</comment>
<comment type="pathway">
    <text evidence="1">Nitrogen metabolism; nitric oxide reduction.</text>
</comment>
<protein>
    <recommendedName>
        <fullName evidence="1">Anaerobic nitric oxide reductase transcription regulator NorR</fullName>
    </recommendedName>
</protein>
<feature type="chain" id="PRO_1000141196" description="Anaerobic nitric oxide reductase transcription regulator NorR">
    <location>
        <begin position="1"/>
        <end position="506"/>
    </location>
</feature>
<feature type="domain" description="Sigma-54 factor interaction" evidence="1">
    <location>
        <begin position="187"/>
        <end position="416"/>
    </location>
</feature>
<feature type="DNA-binding region" description="H-T-H motif" evidence="1">
    <location>
        <begin position="481"/>
        <end position="500"/>
    </location>
</feature>
<feature type="binding site" evidence="1">
    <location>
        <begin position="215"/>
        <end position="222"/>
    </location>
    <ligand>
        <name>ATP</name>
        <dbReference type="ChEBI" id="CHEBI:30616"/>
    </ligand>
</feature>
<feature type="binding site" evidence="1">
    <location>
        <begin position="278"/>
        <end position="287"/>
    </location>
    <ligand>
        <name>ATP</name>
        <dbReference type="ChEBI" id="CHEBI:30616"/>
    </ligand>
</feature>
<feature type="modified residue" description="4-aspartylphosphate" evidence="1">
    <location>
        <position position="57"/>
    </location>
</feature>
<dbReference type="EMBL" id="CP001138">
    <property type="protein sequence ID" value="ACH48780.1"/>
    <property type="molecule type" value="Genomic_DNA"/>
</dbReference>
<dbReference type="RefSeq" id="WP_000010808.1">
    <property type="nucleotide sequence ID" value="NC_011149.1"/>
</dbReference>
<dbReference type="SMR" id="B5F363"/>
<dbReference type="KEGG" id="sea:SeAg_B2959"/>
<dbReference type="HOGENOM" id="CLU_000445_125_2_6"/>
<dbReference type="UniPathway" id="UPA00638"/>
<dbReference type="Proteomes" id="UP000008819">
    <property type="component" value="Chromosome"/>
</dbReference>
<dbReference type="GO" id="GO:0005524">
    <property type="term" value="F:ATP binding"/>
    <property type="evidence" value="ECO:0007669"/>
    <property type="project" value="UniProtKB-UniRule"/>
</dbReference>
<dbReference type="GO" id="GO:0016887">
    <property type="term" value="F:ATP hydrolysis activity"/>
    <property type="evidence" value="ECO:0007669"/>
    <property type="project" value="InterPro"/>
</dbReference>
<dbReference type="GO" id="GO:0003677">
    <property type="term" value="F:DNA binding"/>
    <property type="evidence" value="ECO:0007669"/>
    <property type="project" value="UniProtKB-KW"/>
</dbReference>
<dbReference type="GO" id="GO:0003700">
    <property type="term" value="F:DNA-binding transcription factor activity"/>
    <property type="evidence" value="ECO:0007669"/>
    <property type="project" value="UniProtKB-UniRule"/>
</dbReference>
<dbReference type="GO" id="GO:0000160">
    <property type="term" value="P:phosphorelay signal transduction system"/>
    <property type="evidence" value="ECO:0007669"/>
    <property type="project" value="UniProtKB-UniRule"/>
</dbReference>
<dbReference type="CDD" id="cd00009">
    <property type="entry name" value="AAA"/>
    <property type="match status" value="1"/>
</dbReference>
<dbReference type="FunFam" id="1.10.8.60:FF:000045">
    <property type="entry name" value="Anaerobic nitric oxide reductase transcription regulator NorR"/>
    <property type="match status" value="1"/>
</dbReference>
<dbReference type="FunFam" id="3.30.450.40:FF:000021">
    <property type="entry name" value="Anaerobic nitric oxide reductase transcription regulator NorR"/>
    <property type="match status" value="1"/>
</dbReference>
<dbReference type="FunFam" id="3.40.50.300:FF:000006">
    <property type="entry name" value="DNA-binding transcriptional regulator NtrC"/>
    <property type="match status" value="1"/>
</dbReference>
<dbReference type="Gene3D" id="1.10.8.60">
    <property type="match status" value="1"/>
</dbReference>
<dbReference type="Gene3D" id="3.30.450.40">
    <property type="match status" value="1"/>
</dbReference>
<dbReference type="Gene3D" id="1.10.10.60">
    <property type="entry name" value="Homeodomain-like"/>
    <property type="match status" value="1"/>
</dbReference>
<dbReference type="Gene3D" id="3.40.50.300">
    <property type="entry name" value="P-loop containing nucleotide triphosphate hydrolases"/>
    <property type="match status" value="1"/>
</dbReference>
<dbReference type="HAMAP" id="MF_01314">
    <property type="entry name" value="NorR"/>
    <property type="match status" value="1"/>
</dbReference>
<dbReference type="InterPro" id="IPR003593">
    <property type="entry name" value="AAA+_ATPase"/>
</dbReference>
<dbReference type="InterPro" id="IPR003018">
    <property type="entry name" value="GAF"/>
</dbReference>
<dbReference type="InterPro" id="IPR029016">
    <property type="entry name" value="GAF-like_dom_sf"/>
</dbReference>
<dbReference type="InterPro" id="IPR009057">
    <property type="entry name" value="Homeodomain-like_sf"/>
</dbReference>
<dbReference type="InterPro" id="IPR023944">
    <property type="entry name" value="NorR"/>
</dbReference>
<dbReference type="InterPro" id="IPR027417">
    <property type="entry name" value="P-loop_NTPase"/>
</dbReference>
<dbReference type="InterPro" id="IPR002078">
    <property type="entry name" value="Sigma_54_int"/>
</dbReference>
<dbReference type="InterPro" id="IPR025662">
    <property type="entry name" value="Sigma_54_int_dom_ATP-bd_1"/>
</dbReference>
<dbReference type="InterPro" id="IPR025943">
    <property type="entry name" value="Sigma_54_int_dom_ATP-bd_2"/>
</dbReference>
<dbReference type="InterPro" id="IPR025944">
    <property type="entry name" value="Sigma_54_int_dom_CS"/>
</dbReference>
<dbReference type="NCBIfam" id="NF003451">
    <property type="entry name" value="PRK05022.1"/>
    <property type="match status" value="1"/>
</dbReference>
<dbReference type="PANTHER" id="PTHR32071:SF35">
    <property type="entry name" value="ANAEROBIC NITRIC OXIDE REDUCTASE TRANSCRIPTION REGULATOR NORR"/>
    <property type="match status" value="1"/>
</dbReference>
<dbReference type="PANTHER" id="PTHR32071">
    <property type="entry name" value="TRANSCRIPTIONAL REGULATORY PROTEIN"/>
    <property type="match status" value="1"/>
</dbReference>
<dbReference type="Pfam" id="PF01590">
    <property type="entry name" value="GAF"/>
    <property type="match status" value="1"/>
</dbReference>
<dbReference type="Pfam" id="PF00158">
    <property type="entry name" value="Sigma54_activat"/>
    <property type="match status" value="1"/>
</dbReference>
<dbReference type="SMART" id="SM00382">
    <property type="entry name" value="AAA"/>
    <property type="match status" value="1"/>
</dbReference>
<dbReference type="SMART" id="SM00065">
    <property type="entry name" value="GAF"/>
    <property type="match status" value="1"/>
</dbReference>
<dbReference type="SUPFAM" id="SSF55781">
    <property type="entry name" value="GAF domain-like"/>
    <property type="match status" value="1"/>
</dbReference>
<dbReference type="SUPFAM" id="SSF46689">
    <property type="entry name" value="Homeodomain-like"/>
    <property type="match status" value="1"/>
</dbReference>
<dbReference type="SUPFAM" id="SSF52540">
    <property type="entry name" value="P-loop containing nucleoside triphosphate hydrolases"/>
    <property type="match status" value="1"/>
</dbReference>
<dbReference type="PROSITE" id="PS00675">
    <property type="entry name" value="SIGMA54_INTERACT_1"/>
    <property type="match status" value="1"/>
</dbReference>
<dbReference type="PROSITE" id="PS00676">
    <property type="entry name" value="SIGMA54_INTERACT_2"/>
    <property type="match status" value="1"/>
</dbReference>
<dbReference type="PROSITE" id="PS00688">
    <property type="entry name" value="SIGMA54_INTERACT_3"/>
    <property type="match status" value="1"/>
</dbReference>
<dbReference type="PROSITE" id="PS50045">
    <property type="entry name" value="SIGMA54_INTERACT_4"/>
    <property type="match status" value="1"/>
</dbReference>
<keyword id="KW-0067">ATP-binding</keyword>
<keyword id="KW-0238">DNA-binding</keyword>
<keyword id="KW-0547">Nucleotide-binding</keyword>
<keyword id="KW-0597">Phosphoprotein</keyword>
<keyword id="KW-0804">Transcription</keyword>
<keyword id="KW-0805">Transcription regulation</keyword>
<proteinExistence type="inferred from homology"/>
<accession>B5F363</accession>
<name>NORR_SALA4</name>
<reference key="1">
    <citation type="journal article" date="2011" name="J. Bacteriol.">
        <title>Comparative genomics of 28 Salmonella enterica isolates: evidence for CRISPR-mediated adaptive sublineage evolution.</title>
        <authorList>
            <person name="Fricke W.F."/>
            <person name="Mammel M.K."/>
            <person name="McDermott P.F."/>
            <person name="Tartera C."/>
            <person name="White D.G."/>
            <person name="Leclerc J.E."/>
            <person name="Ravel J."/>
            <person name="Cebula T.A."/>
        </authorList>
    </citation>
    <scope>NUCLEOTIDE SEQUENCE [LARGE SCALE GENOMIC DNA]</scope>
    <source>
        <strain>SL483</strain>
    </source>
</reference>
<gene>
    <name evidence="1" type="primary">norR</name>
    <name type="ordered locus">SeAg_B2959</name>
</gene>
<sequence>MSFSVEVLAGIAIELQRGIGHQDRFQRLITTLRQVLACDASALLRYESRQFIPLAIDGLAQDVLGRRFTLEGHPRLEAIARAGDVVRFPADSDLPDPYDGLIPGQESLKVHACVGLPLFAGQNLIGALTLDAMTPEQFEVFSDEELRLVAALAAGALSNALLIEQLESQNMLPGSSGVFEPIKETHMIGLSPAMTQLKKEIEIVAGSDLNVLIGGETGTGKELVAKAIHQGSPRAVNPLVYLNCAALPESVAESELFGHVKGAFTGAISNRSGKFEMADNGTLFLDEIGELSLALQAKLLRVLQYGDIQRVGDDRSLRVDVRVLAATNRDLREEVLAGRFRADLFHRLSVFPLFVPPLRERGDDVVLLAGYFCEQCRLRLGLSRVVLSPDARRHLLNYGWPGNVRELEHAIHRAVVLARATRAGDEVILEAQHFALSEDVLPAPPAESFLALPTCRNLRESTENFQREMIRQALAQNNHNWAASARALETDVANLHRLAKRLGLKD</sequence>
<organism>
    <name type="scientific">Salmonella agona (strain SL483)</name>
    <dbReference type="NCBI Taxonomy" id="454166"/>
    <lineage>
        <taxon>Bacteria</taxon>
        <taxon>Pseudomonadati</taxon>
        <taxon>Pseudomonadota</taxon>
        <taxon>Gammaproteobacteria</taxon>
        <taxon>Enterobacterales</taxon>
        <taxon>Enterobacteriaceae</taxon>
        <taxon>Salmonella</taxon>
    </lineage>
</organism>
<evidence type="ECO:0000255" key="1">
    <source>
        <dbReference type="HAMAP-Rule" id="MF_01314"/>
    </source>
</evidence>